<organism>
    <name type="scientific">Prochlorococcus marinus (strain MIT 9301)</name>
    <dbReference type="NCBI Taxonomy" id="167546"/>
    <lineage>
        <taxon>Bacteria</taxon>
        <taxon>Bacillati</taxon>
        <taxon>Cyanobacteriota</taxon>
        <taxon>Cyanophyceae</taxon>
        <taxon>Synechococcales</taxon>
        <taxon>Prochlorococcaceae</taxon>
        <taxon>Prochlorococcus</taxon>
    </lineage>
</organism>
<gene>
    <name evidence="1" type="primary">rimM</name>
    <name type="ordered locus">P9301_17981</name>
</gene>
<proteinExistence type="inferred from homology"/>
<name>RIMM_PROM0</name>
<protein>
    <recommendedName>
        <fullName evidence="1">Ribosome maturation factor RimM</fullName>
    </recommendedName>
</protein>
<accession>A3PF96</accession>
<comment type="function">
    <text evidence="1">An accessory protein needed during the final step in the assembly of 30S ribosomal subunit, possibly for assembly of the head region. Essential for efficient processing of 16S rRNA. May be needed both before and after RbfA during the maturation of 16S rRNA. It has affinity for free ribosomal 30S subunits but not for 70S ribosomes.</text>
</comment>
<comment type="subunit">
    <text evidence="1">Binds ribosomal protein uS19.</text>
</comment>
<comment type="subcellular location">
    <subcellularLocation>
        <location evidence="1">Cytoplasm</location>
    </subcellularLocation>
</comment>
<comment type="domain">
    <text evidence="1">The PRC barrel domain binds ribosomal protein uS19.</text>
</comment>
<comment type="similarity">
    <text evidence="1">Belongs to the RimM family.</text>
</comment>
<reference key="1">
    <citation type="journal article" date="2007" name="PLoS Genet.">
        <title>Patterns and implications of gene gain and loss in the evolution of Prochlorococcus.</title>
        <authorList>
            <person name="Kettler G.C."/>
            <person name="Martiny A.C."/>
            <person name="Huang K."/>
            <person name="Zucker J."/>
            <person name="Coleman M.L."/>
            <person name="Rodrigue S."/>
            <person name="Chen F."/>
            <person name="Lapidus A."/>
            <person name="Ferriera S."/>
            <person name="Johnson J."/>
            <person name="Steglich C."/>
            <person name="Church G.M."/>
            <person name="Richardson P."/>
            <person name="Chisholm S.W."/>
        </authorList>
    </citation>
    <scope>NUCLEOTIDE SEQUENCE [LARGE SCALE GENOMIC DNA]</scope>
    <source>
        <strain>MIT 9301</strain>
    </source>
</reference>
<evidence type="ECO:0000255" key="1">
    <source>
        <dbReference type="HAMAP-Rule" id="MF_00014"/>
    </source>
</evidence>
<sequence>MINKNEWLTVGLITSCHGINGQVKVKSLSDFEERFLKPGMRWLQKENEPPSKIELISGFKQPGKETFIVKLQGINTRNDAEQLKTFKILVRTDKLPKLKKEEFHLLELINLEVKTLENDELKTIGKVINLENEKNNLLIIELFKNQKKVLIPFVKEIVPLVDIKNQFVIINPPNGLLEL</sequence>
<keyword id="KW-0143">Chaperone</keyword>
<keyword id="KW-0963">Cytoplasm</keyword>
<keyword id="KW-1185">Reference proteome</keyword>
<keyword id="KW-0690">Ribosome biogenesis</keyword>
<keyword id="KW-0698">rRNA processing</keyword>
<dbReference type="EMBL" id="CP000576">
    <property type="protein sequence ID" value="ABO18421.1"/>
    <property type="molecule type" value="Genomic_DNA"/>
</dbReference>
<dbReference type="RefSeq" id="WP_011863708.1">
    <property type="nucleotide sequence ID" value="NC_009091.1"/>
</dbReference>
<dbReference type="SMR" id="A3PF96"/>
<dbReference type="STRING" id="167546.P9301_17981"/>
<dbReference type="KEGG" id="pmg:P9301_17981"/>
<dbReference type="eggNOG" id="COG0806">
    <property type="taxonomic scope" value="Bacteria"/>
</dbReference>
<dbReference type="HOGENOM" id="CLU_077636_3_0_3"/>
<dbReference type="OrthoDB" id="9810331at2"/>
<dbReference type="Proteomes" id="UP000001430">
    <property type="component" value="Chromosome"/>
</dbReference>
<dbReference type="GO" id="GO:0005737">
    <property type="term" value="C:cytoplasm"/>
    <property type="evidence" value="ECO:0007669"/>
    <property type="project" value="UniProtKB-SubCell"/>
</dbReference>
<dbReference type="GO" id="GO:0005840">
    <property type="term" value="C:ribosome"/>
    <property type="evidence" value="ECO:0007669"/>
    <property type="project" value="InterPro"/>
</dbReference>
<dbReference type="GO" id="GO:0043022">
    <property type="term" value="F:ribosome binding"/>
    <property type="evidence" value="ECO:0007669"/>
    <property type="project" value="InterPro"/>
</dbReference>
<dbReference type="GO" id="GO:0042274">
    <property type="term" value="P:ribosomal small subunit biogenesis"/>
    <property type="evidence" value="ECO:0007669"/>
    <property type="project" value="UniProtKB-UniRule"/>
</dbReference>
<dbReference type="GO" id="GO:0006364">
    <property type="term" value="P:rRNA processing"/>
    <property type="evidence" value="ECO:0007669"/>
    <property type="project" value="UniProtKB-UniRule"/>
</dbReference>
<dbReference type="Gene3D" id="2.30.30.240">
    <property type="entry name" value="PRC-barrel domain"/>
    <property type="match status" value="1"/>
</dbReference>
<dbReference type="Gene3D" id="2.40.30.60">
    <property type="entry name" value="RimM"/>
    <property type="match status" value="1"/>
</dbReference>
<dbReference type="HAMAP" id="MF_00014">
    <property type="entry name" value="Ribosome_mat_RimM"/>
    <property type="match status" value="1"/>
</dbReference>
<dbReference type="InterPro" id="IPR011033">
    <property type="entry name" value="PRC_barrel-like_sf"/>
</dbReference>
<dbReference type="InterPro" id="IPR056792">
    <property type="entry name" value="PRC_RimM"/>
</dbReference>
<dbReference type="InterPro" id="IPR011961">
    <property type="entry name" value="RimM"/>
</dbReference>
<dbReference type="InterPro" id="IPR002676">
    <property type="entry name" value="RimM_N"/>
</dbReference>
<dbReference type="InterPro" id="IPR036976">
    <property type="entry name" value="RimM_N_sf"/>
</dbReference>
<dbReference type="InterPro" id="IPR009000">
    <property type="entry name" value="Transl_B-barrel_sf"/>
</dbReference>
<dbReference type="NCBIfam" id="TIGR02273">
    <property type="entry name" value="16S_RimM"/>
    <property type="match status" value="1"/>
</dbReference>
<dbReference type="PANTHER" id="PTHR33692">
    <property type="entry name" value="RIBOSOME MATURATION FACTOR RIMM"/>
    <property type="match status" value="1"/>
</dbReference>
<dbReference type="PANTHER" id="PTHR33692:SF1">
    <property type="entry name" value="RIBOSOME MATURATION FACTOR RIMM"/>
    <property type="match status" value="1"/>
</dbReference>
<dbReference type="Pfam" id="PF24986">
    <property type="entry name" value="PRC_RimM"/>
    <property type="match status" value="1"/>
</dbReference>
<dbReference type="Pfam" id="PF01782">
    <property type="entry name" value="RimM"/>
    <property type="match status" value="1"/>
</dbReference>
<dbReference type="SUPFAM" id="SSF50346">
    <property type="entry name" value="PRC-barrel domain"/>
    <property type="match status" value="1"/>
</dbReference>
<dbReference type="SUPFAM" id="SSF50447">
    <property type="entry name" value="Translation proteins"/>
    <property type="match status" value="1"/>
</dbReference>
<feature type="chain" id="PRO_1000001210" description="Ribosome maturation factor RimM">
    <location>
        <begin position="1"/>
        <end position="179"/>
    </location>
</feature>
<feature type="domain" description="PRC barrel" evidence="1">
    <location>
        <begin position="100"/>
        <end position="176"/>
    </location>
</feature>